<evidence type="ECO:0000255" key="1">
    <source>
        <dbReference type="HAMAP-Rule" id="MF_01283"/>
    </source>
</evidence>
<feature type="chain" id="PRO_1000165257" description="Riboflavin biosynthesis protein RibBA">
    <location>
        <begin position="1"/>
        <end position="405"/>
    </location>
</feature>
<feature type="region of interest" description="DHBP synthase">
    <location>
        <begin position="1"/>
        <end position="205"/>
    </location>
</feature>
<feature type="region of interest" description="GTP cyclohydrolase II">
    <location>
        <begin position="206"/>
        <end position="405"/>
    </location>
</feature>
<feature type="active site" description="Proton acceptor; for GTP cyclohydrolase activity" evidence="1">
    <location>
        <position position="333"/>
    </location>
</feature>
<feature type="active site" description="Nucleophile; for GTP cyclohydrolase activity" evidence="1">
    <location>
        <position position="335"/>
    </location>
</feature>
<feature type="binding site" evidence="1">
    <location>
        <begin position="30"/>
        <end position="31"/>
    </location>
    <ligand>
        <name>D-ribulose 5-phosphate</name>
        <dbReference type="ChEBI" id="CHEBI:58121"/>
    </ligand>
</feature>
<feature type="binding site" evidence="1">
    <location>
        <position position="31"/>
    </location>
    <ligand>
        <name>Mg(2+)</name>
        <dbReference type="ChEBI" id="CHEBI:18420"/>
        <label>1</label>
    </ligand>
</feature>
<feature type="binding site" evidence="1">
    <location>
        <position position="31"/>
    </location>
    <ligand>
        <name>Mg(2+)</name>
        <dbReference type="ChEBI" id="CHEBI:18420"/>
        <label>2</label>
    </ligand>
</feature>
<feature type="binding site" evidence="1">
    <location>
        <position position="35"/>
    </location>
    <ligand>
        <name>D-ribulose 5-phosphate</name>
        <dbReference type="ChEBI" id="CHEBI:58121"/>
    </ligand>
</feature>
<feature type="binding site" evidence="1">
    <location>
        <begin position="144"/>
        <end position="148"/>
    </location>
    <ligand>
        <name>D-ribulose 5-phosphate</name>
        <dbReference type="ChEBI" id="CHEBI:58121"/>
    </ligand>
</feature>
<feature type="binding site" evidence="1">
    <location>
        <position position="147"/>
    </location>
    <ligand>
        <name>Mg(2+)</name>
        <dbReference type="ChEBI" id="CHEBI:18420"/>
        <label>2</label>
    </ligand>
</feature>
<feature type="binding site" evidence="1">
    <location>
        <position position="168"/>
    </location>
    <ligand>
        <name>D-ribulose 5-phosphate</name>
        <dbReference type="ChEBI" id="CHEBI:58121"/>
    </ligand>
</feature>
<feature type="binding site" evidence="1">
    <location>
        <begin position="256"/>
        <end position="260"/>
    </location>
    <ligand>
        <name>GTP</name>
        <dbReference type="ChEBI" id="CHEBI:37565"/>
    </ligand>
</feature>
<feature type="binding site" evidence="1">
    <location>
        <position position="261"/>
    </location>
    <ligand>
        <name>Zn(2+)</name>
        <dbReference type="ChEBI" id="CHEBI:29105"/>
        <note>catalytic</note>
    </ligand>
</feature>
<feature type="binding site" evidence="1">
    <location>
        <position position="272"/>
    </location>
    <ligand>
        <name>Zn(2+)</name>
        <dbReference type="ChEBI" id="CHEBI:29105"/>
        <note>catalytic</note>
    </ligand>
</feature>
<feature type="binding site" evidence="1">
    <location>
        <position position="274"/>
    </location>
    <ligand>
        <name>Zn(2+)</name>
        <dbReference type="ChEBI" id="CHEBI:29105"/>
        <note>catalytic</note>
    </ligand>
</feature>
<feature type="binding site" evidence="1">
    <location>
        <position position="277"/>
    </location>
    <ligand>
        <name>GTP</name>
        <dbReference type="ChEBI" id="CHEBI:37565"/>
    </ligand>
</feature>
<feature type="binding site" evidence="1">
    <location>
        <begin position="299"/>
        <end position="301"/>
    </location>
    <ligand>
        <name>GTP</name>
        <dbReference type="ChEBI" id="CHEBI:37565"/>
    </ligand>
</feature>
<feature type="binding site" evidence="1">
    <location>
        <position position="321"/>
    </location>
    <ligand>
        <name>GTP</name>
        <dbReference type="ChEBI" id="CHEBI:37565"/>
    </ligand>
</feature>
<feature type="binding site" evidence="1">
    <location>
        <position position="356"/>
    </location>
    <ligand>
        <name>GTP</name>
        <dbReference type="ChEBI" id="CHEBI:37565"/>
    </ligand>
</feature>
<feature type="binding site" evidence="1">
    <location>
        <position position="361"/>
    </location>
    <ligand>
        <name>GTP</name>
        <dbReference type="ChEBI" id="CHEBI:37565"/>
    </ligand>
</feature>
<feature type="site" description="Essential for DHBP synthase activity" evidence="1">
    <location>
        <position position="130"/>
    </location>
</feature>
<feature type="site" description="Essential for DHBP synthase activity" evidence="1">
    <location>
        <position position="168"/>
    </location>
</feature>
<sequence>MEEIKLNTIEEALEDFKEGKFLIVVDDEDRENEGDFIIAAEKITPDKVNFMMHHGRGVLCAPISEERAHELELEMQVPDNTSVHETPFTVTVDRLGNGCTTGVSMYDRAQTILALADPNTRPSDLGRPGHICPLRARSRGVLRRAGHTEAAVDLARLCGMQPAAALIEIINEDGTMARLPQLWEVSKRFGLKIIAIKDLIAYRLKQESIVEKGVEVDMPTEYGHFRLIPFRQKSNGLEHIALFKGTWDENEPILVRMHSSCATGDIFGSMRCDCGGQLLQAMEKIEKEGKGAIIYLNQEGRGIGLMEKMKAYKLQEQGMDTIDANLCLGHKADERDYGIGAQILRLLGIKKMRLMTNNPVKRIGLEAFGLEIVENIPLETAPNRYNEFYLRTKKERMGHELHNIK</sequence>
<organism>
    <name type="scientific">Porphyromonas gingivalis (strain ATCC BAA-308 / W83)</name>
    <dbReference type="NCBI Taxonomy" id="242619"/>
    <lineage>
        <taxon>Bacteria</taxon>
        <taxon>Pseudomonadati</taxon>
        <taxon>Bacteroidota</taxon>
        <taxon>Bacteroidia</taxon>
        <taxon>Bacteroidales</taxon>
        <taxon>Porphyromonadaceae</taxon>
        <taxon>Porphyromonas</taxon>
    </lineage>
</organism>
<name>RIBBA_PORGI</name>
<protein>
    <recommendedName>
        <fullName evidence="1">Riboflavin biosynthesis protein RibBA</fullName>
    </recommendedName>
    <domain>
        <recommendedName>
            <fullName evidence="1">3,4-dihydroxy-2-butanone 4-phosphate synthase</fullName>
            <shortName evidence="1">DHBP synthase</shortName>
            <ecNumber evidence="1">4.1.99.12</ecNumber>
        </recommendedName>
    </domain>
    <domain>
        <recommendedName>
            <fullName evidence="1">GTP cyclohydrolase-2</fullName>
            <ecNumber evidence="1">3.5.4.25</ecNumber>
        </recommendedName>
        <alternativeName>
            <fullName evidence="1">GTP cyclohydrolase II</fullName>
        </alternativeName>
    </domain>
</protein>
<comment type="function">
    <text evidence="1">Catalyzes the conversion of D-ribulose 5-phosphate to formate and 3,4-dihydroxy-2-butanone 4-phosphate.</text>
</comment>
<comment type="function">
    <text evidence="1">Catalyzes the conversion of GTP to 2,5-diamino-6-ribosylamino-4(3H)-pyrimidinone 5'-phosphate (DARP), formate and pyrophosphate.</text>
</comment>
<comment type="catalytic activity">
    <reaction evidence="1">
        <text>D-ribulose 5-phosphate = (2S)-2-hydroxy-3-oxobutyl phosphate + formate + H(+)</text>
        <dbReference type="Rhea" id="RHEA:18457"/>
        <dbReference type="ChEBI" id="CHEBI:15378"/>
        <dbReference type="ChEBI" id="CHEBI:15740"/>
        <dbReference type="ChEBI" id="CHEBI:58121"/>
        <dbReference type="ChEBI" id="CHEBI:58830"/>
        <dbReference type="EC" id="4.1.99.12"/>
    </reaction>
</comment>
<comment type="catalytic activity">
    <reaction evidence="1">
        <text>GTP + 4 H2O = 2,5-diamino-6-hydroxy-4-(5-phosphoribosylamino)-pyrimidine + formate + 2 phosphate + 3 H(+)</text>
        <dbReference type="Rhea" id="RHEA:23704"/>
        <dbReference type="ChEBI" id="CHEBI:15377"/>
        <dbReference type="ChEBI" id="CHEBI:15378"/>
        <dbReference type="ChEBI" id="CHEBI:15740"/>
        <dbReference type="ChEBI" id="CHEBI:37565"/>
        <dbReference type="ChEBI" id="CHEBI:43474"/>
        <dbReference type="ChEBI" id="CHEBI:58614"/>
        <dbReference type="EC" id="3.5.4.25"/>
    </reaction>
</comment>
<comment type="cofactor">
    <cofactor evidence="1">
        <name>Mg(2+)</name>
        <dbReference type="ChEBI" id="CHEBI:18420"/>
    </cofactor>
    <cofactor evidence="1">
        <name>Mn(2+)</name>
        <dbReference type="ChEBI" id="CHEBI:29035"/>
    </cofactor>
    <text evidence="1">Binds 2 divalent metal cations per subunit. Magnesium or manganese.</text>
</comment>
<comment type="cofactor">
    <cofactor evidence="1">
        <name>Zn(2+)</name>
        <dbReference type="ChEBI" id="CHEBI:29105"/>
    </cofactor>
    <text evidence="1">Binds 1 zinc ion per subunit.</text>
</comment>
<comment type="pathway">
    <text evidence="1">Cofactor biosynthesis; riboflavin biosynthesis; 2-hydroxy-3-oxobutyl phosphate from D-ribulose 5-phosphate: step 1/1.</text>
</comment>
<comment type="pathway">
    <text evidence="1">Cofactor biosynthesis; riboflavin biosynthesis; 5-amino-6-(D-ribitylamino)uracil from GTP: step 1/4.</text>
</comment>
<comment type="similarity">
    <text evidence="1">In the N-terminal section; belongs to the DHBP synthase family.</text>
</comment>
<comment type="similarity">
    <text evidence="1">In the C-terminal section; belongs to the GTP cyclohydrolase II family.</text>
</comment>
<proteinExistence type="inferred from homology"/>
<dbReference type="EC" id="4.1.99.12" evidence="1"/>
<dbReference type="EC" id="3.5.4.25" evidence="1"/>
<dbReference type="EMBL" id="AE015924">
    <property type="protein sequence ID" value="AAQ65785.1"/>
    <property type="molecule type" value="Genomic_DNA"/>
</dbReference>
<dbReference type="RefSeq" id="WP_004585136.1">
    <property type="nucleotide sequence ID" value="NC_002950.2"/>
</dbReference>
<dbReference type="SMR" id="Q7MWK9"/>
<dbReference type="STRING" id="242619.PG_0599"/>
<dbReference type="EnsemblBacteria" id="AAQ65785">
    <property type="protein sequence ID" value="AAQ65785"/>
    <property type="gene ID" value="PG_0599"/>
</dbReference>
<dbReference type="GeneID" id="29255869"/>
<dbReference type="KEGG" id="pgi:PG_0599"/>
<dbReference type="eggNOG" id="COG0108">
    <property type="taxonomic scope" value="Bacteria"/>
</dbReference>
<dbReference type="eggNOG" id="COG0807">
    <property type="taxonomic scope" value="Bacteria"/>
</dbReference>
<dbReference type="HOGENOM" id="CLU_020273_1_2_10"/>
<dbReference type="UniPathway" id="UPA00275">
    <property type="reaction ID" value="UER00399"/>
</dbReference>
<dbReference type="UniPathway" id="UPA00275">
    <property type="reaction ID" value="UER00400"/>
</dbReference>
<dbReference type="Proteomes" id="UP000000588">
    <property type="component" value="Chromosome"/>
</dbReference>
<dbReference type="GO" id="GO:0005829">
    <property type="term" value="C:cytosol"/>
    <property type="evidence" value="ECO:0007669"/>
    <property type="project" value="TreeGrafter"/>
</dbReference>
<dbReference type="GO" id="GO:0008686">
    <property type="term" value="F:3,4-dihydroxy-2-butanone-4-phosphate synthase activity"/>
    <property type="evidence" value="ECO:0007669"/>
    <property type="project" value="UniProtKB-UniRule"/>
</dbReference>
<dbReference type="GO" id="GO:0005525">
    <property type="term" value="F:GTP binding"/>
    <property type="evidence" value="ECO:0007669"/>
    <property type="project" value="UniProtKB-KW"/>
</dbReference>
<dbReference type="GO" id="GO:0003935">
    <property type="term" value="F:GTP cyclohydrolase II activity"/>
    <property type="evidence" value="ECO:0007669"/>
    <property type="project" value="UniProtKB-UniRule"/>
</dbReference>
<dbReference type="GO" id="GO:0000287">
    <property type="term" value="F:magnesium ion binding"/>
    <property type="evidence" value="ECO:0007669"/>
    <property type="project" value="UniProtKB-UniRule"/>
</dbReference>
<dbReference type="GO" id="GO:0030145">
    <property type="term" value="F:manganese ion binding"/>
    <property type="evidence" value="ECO:0007669"/>
    <property type="project" value="UniProtKB-UniRule"/>
</dbReference>
<dbReference type="GO" id="GO:0008270">
    <property type="term" value="F:zinc ion binding"/>
    <property type="evidence" value="ECO:0007669"/>
    <property type="project" value="UniProtKB-UniRule"/>
</dbReference>
<dbReference type="GO" id="GO:0009231">
    <property type="term" value="P:riboflavin biosynthetic process"/>
    <property type="evidence" value="ECO:0007669"/>
    <property type="project" value="UniProtKB-UniRule"/>
</dbReference>
<dbReference type="CDD" id="cd00641">
    <property type="entry name" value="GTP_cyclohydro2"/>
    <property type="match status" value="1"/>
</dbReference>
<dbReference type="FunFam" id="3.40.50.10990:FF:000001">
    <property type="entry name" value="Riboflavin biosynthesis protein RibBA"/>
    <property type="match status" value="1"/>
</dbReference>
<dbReference type="FunFam" id="3.90.870.10:FF:000001">
    <property type="entry name" value="Riboflavin biosynthesis protein RibBA"/>
    <property type="match status" value="1"/>
</dbReference>
<dbReference type="Gene3D" id="3.90.870.10">
    <property type="entry name" value="DHBP synthase"/>
    <property type="match status" value="1"/>
</dbReference>
<dbReference type="Gene3D" id="3.40.50.10990">
    <property type="entry name" value="GTP cyclohydrolase II"/>
    <property type="match status" value="1"/>
</dbReference>
<dbReference type="HAMAP" id="MF_00179">
    <property type="entry name" value="RibA"/>
    <property type="match status" value="1"/>
</dbReference>
<dbReference type="HAMAP" id="MF_01283">
    <property type="entry name" value="RibBA"/>
    <property type="match status" value="1"/>
</dbReference>
<dbReference type="InterPro" id="IPR017945">
    <property type="entry name" value="DHBP_synth_RibB-like_a/b_dom"/>
</dbReference>
<dbReference type="InterPro" id="IPR000422">
    <property type="entry name" value="DHBP_synthase_RibB"/>
</dbReference>
<dbReference type="InterPro" id="IPR032677">
    <property type="entry name" value="GTP_cyclohydro_II"/>
</dbReference>
<dbReference type="InterPro" id="IPR000926">
    <property type="entry name" value="RibA"/>
</dbReference>
<dbReference type="InterPro" id="IPR036144">
    <property type="entry name" value="RibA-like_sf"/>
</dbReference>
<dbReference type="InterPro" id="IPR016299">
    <property type="entry name" value="Riboflavin_synth_RibBA"/>
</dbReference>
<dbReference type="NCBIfam" id="NF001591">
    <property type="entry name" value="PRK00393.1"/>
    <property type="match status" value="1"/>
</dbReference>
<dbReference type="NCBIfam" id="NF006803">
    <property type="entry name" value="PRK09311.1"/>
    <property type="match status" value="1"/>
</dbReference>
<dbReference type="NCBIfam" id="TIGR00505">
    <property type="entry name" value="ribA"/>
    <property type="match status" value="1"/>
</dbReference>
<dbReference type="NCBIfam" id="TIGR00506">
    <property type="entry name" value="ribB"/>
    <property type="match status" value="1"/>
</dbReference>
<dbReference type="PANTHER" id="PTHR21327:SF18">
    <property type="entry name" value="3,4-DIHYDROXY-2-BUTANONE 4-PHOSPHATE SYNTHASE"/>
    <property type="match status" value="1"/>
</dbReference>
<dbReference type="PANTHER" id="PTHR21327">
    <property type="entry name" value="GTP CYCLOHYDROLASE II-RELATED"/>
    <property type="match status" value="1"/>
</dbReference>
<dbReference type="Pfam" id="PF00926">
    <property type="entry name" value="DHBP_synthase"/>
    <property type="match status" value="1"/>
</dbReference>
<dbReference type="Pfam" id="PF00925">
    <property type="entry name" value="GTP_cyclohydro2"/>
    <property type="match status" value="1"/>
</dbReference>
<dbReference type="PIRSF" id="PIRSF001259">
    <property type="entry name" value="RibA"/>
    <property type="match status" value="1"/>
</dbReference>
<dbReference type="SUPFAM" id="SSF142695">
    <property type="entry name" value="RibA-like"/>
    <property type="match status" value="1"/>
</dbReference>
<dbReference type="SUPFAM" id="SSF55821">
    <property type="entry name" value="YrdC/RibB"/>
    <property type="match status" value="1"/>
</dbReference>
<reference key="1">
    <citation type="journal article" date="2003" name="J. Bacteriol.">
        <title>Complete genome sequence of the oral pathogenic bacterium Porphyromonas gingivalis strain W83.</title>
        <authorList>
            <person name="Nelson K.E."/>
            <person name="Fleischmann R.D."/>
            <person name="DeBoy R.T."/>
            <person name="Paulsen I.T."/>
            <person name="Fouts D.E."/>
            <person name="Eisen J.A."/>
            <person name="Daugherty S.C."/>
            <person name="Dodson R.J."/>
            <person name="Durkin A.S."/>
            <person name="Gwinn M.L."/>
            <person name="Haft D.H."/>
            <person name="Kolonay J.F."/>
            <person name="Nelson W.C."/>
            <person name="Mason T.M."/>
            <person name="Tallon L."/>
            <person name="Gray J."/>
            <person name="Granger D."/>
            <person name="Tettelin H."/>
            <person name="Dong H."/>
            <person name="Galvin J.L."/>
            <person name="Duncan M.J."/>
            <person name="Dewhirst F.E."/>
            <person name="Fraser C.M."/>
        </authorList>
    </citation>
    <scope>NUCLEOTIDE SEQUENCE [LARGE SCALE GENOMIC DNA]</scope>
    <source>
        <strain>ATCC BAA-308 / W83</strain>
    </source>
</reference>
<gene>
    <name evidence="1" type="primary">ribBA</name>
    <name type="ordered locus">PG_0599</name>
</gene>
<keyword id="KW-0342">GTP-binding</keyword>
<keyword id="KW-0378">Hydrolase</keyword>
<keyword id="KW-0456">Lyase</keyword>
<keyword id="KW-0460">Magnesium</keyword>
<keyword id="KW-0464">Manganese</keyword>
<keyword id="KW-0479">Metal-binding</keyword>
<keyword id="KW-0511">Multifunctional enzyme</keyword>
<keyword id="KW-0547">Nucleotide-binding</keyword>
<keyword id="KW-1185">Reference proteome</keyword>
<keyword id="KW-0686">Riboflavin biosynthesis</keyword>
<keyword id="KW-0862">Zinc</keyword>
<accession>Q7MWK9</accession>